<reference key="1">
    <citation type="journal article" date="2007" name="PLoS ONE">
        <title>A glimpse of streptococcal toxic shock syndrome from comparative genomics of S. suis 2 Chinese isolates.</title>
        <authorList>
            <person name="Chen C."/>
            <person name="Tang J."/>
            <person name="Dong W."/>
            <person name="Wang C."/>
            <person name="Feng Y."/>
            <person name="Wang J."/>
            <person name="Zheng F."/>
            <person name="Pan X."/>
            <person name="Liu D."/>
            <person name="Li M."/>
            <person name="Song Y."/>
            <person name="Zhu X."/>
            <person name="Sun H."/>
            <person name="Feng T."/>
            <person name="Guo Z."/>
            <person name="Ju A."/>
            <person name="Ge J."/>
            <person name="Dong Y."/>
            <person name="Sun W."/>
            <person name="Jiang Y."/>
            <person name="Wang J."/>
            <person name="Yan J."/>
            <person name="Yang H."/>
            <person name="Wang X."/>
            <person name="Gao G.F."/>
            <person name="Yang R."/>
            <person name="Wang J."/>
            <person name="Yu J."/>
        </authorList>
    </citation>
    <scope>NUCLEOTIDE SEQUENCE [LARGE SCALE GENOMIC DNA]</scope>
    <source>
        <strain>05ZYH33</strain>
    </source>
</reference>
<protein>
    <recommendedName>
        <fullName evidence="1">UPF0154 protein SSU05_1707</fullName>
    </recommendedName>
</protein>
<keyword id="KW-1003">Cell membrane</keyword>
<keyword id="KW-0472">Membrane</keyword>
<keyword id="KW-0812">Transmembrane</keyword>
<keyword id="KW-1133">Transmembrane helix</keyword>
<organism>
    <name type="scientific">Streptococcus suis (strain 05ZYH33)</name>
    <dbReference type="NCBI Taxonomy" id="391295"/>
    <lineage>
        <taxon>Bacteria</taxon>
        <taxon>Bacillati</taxon>
        <taxon>Bacillota</taxon>
        <taxon>Bacilli</taxon>
        <taxon>Lactobacillales</taxon>
        <taxon>Streptococcaceae</taxon>
        <taxon>Streptococcus</taxon>
    </lineage>
</organism>
<gene>
    <name type="ordered locus">SSU05_1707</name>
</gene>
<dbReference type="EMBL" id="CP000407">
    <property type="protein sequence ID" value="ABP90673.1"/>
    <property type="molecule type" value="Genomic_DNA"/>
</dbReference>
<dbReference type="SMR" id="A4VX34"/>
<dbReference type="STRING" id="391295.SSU05_1707"/>
<dbReference type="KEGG" id="ssu:SSU05_1707"/>
<dbReference type="eggNOG" id="COG3763">
    <property type="taxonomic scope" value="Bacteria"/>
</dbReference>
<dbReference type="HOGENOM" id="CLU_180108_0_0_9"/>
<dbReference type="BioCyc" id="SSUI391295:GHI8-1761-MONOMER"/>
<dbReference type="GO" id="GO:0005886">
    <property type="term" value="C:plasma membrane"/>
    <property type="evidence" value="ECO:0007669"/>
    <property type="project" value="UniProtKB-SubCell"/>
</dbReference>
<dbReference type="HAMAP" id="MF_00363">
    <property type="entry name" value="UPF0154"/>
    <property type="match status" value="1"/>
</dbReference>
<dbReference type="InterPro" id="IPR005359">
    <property type="entry name" value="UPF0154"/>
</dbReference>
<dbReference type="Pfam" id="PF03672">
    <property type="entry name" value="UPF0154"/>
    <property type="match status" value="1"/>
</dbReference>
<name>Y1707_STRSY</name>
<accession>A4VX34</accession>
<comment type="subcellular location">
    <subcellularLocation>
        <location evidence="1">Cell membrane</location>
        <topology evidence="1">Single-pass membrane protein</topology>
    </subcellularLocation>
</comment>
<comment type="similarity">
    <text evidence="1">Belongs to the UPF0154 family.</text>
</comment>
<evidence type="ECO:0000255" key="1">
    <source>
        <dbReference type="HAMAP-Rule" id="MF_00363"/>
    </source>
</evidence>
<sequence length="78" mass="8653">MNLGLAILLIVLAFAGGVALGIYLSRRQVENYIADKPILDENALRLMMSQMGQKPSEAKVQQVLRQIKSQQKVASKKK</sequence>
<proteinExistence type="inferred from homology"/>
<feature type="chain" id="PRO_1000005648" description="UPF0154 protein SSU05_1707">
    <location>
        <begin position="1"/>
        <end position="78"/>
    </location>
</feature>
<feature type="transmembrane region" description="Helical" evidence="1">
    <location>
        <begin position="3"/>
        <end position="23"/>
    </location>
</feature>